<dbReference type="EC" id="2.4.1.256" evidence="1"/>
<dbReference type="EMBL" id="DS231668">
    <property type="protein sequence ID" value="ESU16278.1"/>
    <property type="molecule type" value="Genomic_DNA"/>
</dbReference>
<dbReference type="EMBL" id="HG970335">
    <property type="protein sequence ID" value="SCB65394.1"/>
    <property type="molecule type" value="Genomic_DNA"/>
</dbReference>
<dbReference type="RefSeq" id="XP_011328038.1">
    <property type="nucleotide sequence ID" value="XM_011329736.1"/>
</dbReference>
<dbReference type="FunCoup" id="Q4HZE0">
    <property type="interactions" value="687"/>
</dbReference>
<dbReference type="STRING" id="229533.Q4HZE0"/>
<dbReference type="GlyCosmos" id="Q4HZE0">
    <property type="glycosylation" value="2 sites, No reported glycans"/>
</dbReference>
<dbReference type="GeneID" id="23556608"/>
<dbReference type="KEGG" id="fgr:FGSG_09668"/>
<dbReference type="VEuPathDB" id="FungiDB:FGRAMPH1_01G26553"/>
<dbReference type="eggNOG" id="KOG2642">
    <property type="taxonomic scope" value="Eukaryota"/>
</dbReference>
<dbReference type="HOGENOM" id="CLU_017053_0_0_1"/>
<dbReference type="InParanoid" id="Q4HZE0"/>
<dbReference type="OrthoDB" id="82421at110618"/>
<dbReference type="UniPathway" id="UPA00378"/>
<dbReference type="Proteomes" id="UP000070720">
    <property type="component" value="Chromosome 4"/>
</dbReference>
<dbReference type="GO" id="GO:0005789">
    <property type="term" value="C:endoplasmic reticulum membrane"/>
    <property type="evidence" value="ECO:0007669"/>
    <property type="project" value="UniProtKB-SubCell"/>
</dbReference>
<dbReference type="GO" id="GO:0106073">
    <property type="term" value="F:dolichyl pyrophosphate Glc2Man9GlcNAc2 alpha-1,2-glucosyltransferase activity"/>
    <property type="evidence" value="ECO:0007669"/>
    <property type="project" value="UniProtKB-EC"/>
</dbReference>
<dbReference type="GO" id="GO:0006488">
    <property type="term" value="P:dolichol-linked oligosaccharide biosynthetic process"/>
    <property type="evidence" value="ECO:0007669"/>
    <property type="project" value="InterPro"/>
</dbReference>
<dbReference type="InterPro" id="IPR016900">
    <property type="entry name" value="Alg10"/>
</dbReference>
<dbReference type="PANTHER" id="PTHR12989">
    <property type="entry name" value="ALPHA-1,2-GLUCOSYLTRANSFERASE ALG10"/>
    <property type="match status" value="1"/>
</dbReference>
<dbReference type="PANTHER" id="PTHR12989:SF10">
    <property type="entry name" value="DOL-P-GLC:GLC(2)MAN(9)GLCNAC(2)-PP-DOL ALPHA-1,2-GLUCOSYLTRANSFERASE-RELATED"/>
    <property type="match status" value="1"/>
</dbReference>
<dbReference type="Pfam" id="PF04922">
    <property type="entry name" value="DIE2_ALG10"/>
    <property type="match status" value="1"/>
</dbReference>
<gene>
    <name type="primary">ALG10</name>
    <name type="ORF">FGRAMPH1_01T26553</name>
    <name type="ORF">FGRRES_09668</name>
    <name type="ORF">FGSG_09668</name>
</gene>
<sequence length="721" mass="82017">MGSSSPAQTSNWYELFTGNWLSRPIRAVLVGALALPFVIWPRNQPQNSNPRLLAFFVYLLHLASIPWLYLVTKLVPEPYLDEIFHIPQAQKYCQGRFLEWDDKITTPPGLYLVSLITPGVVQRNGYLDYACSVQNLRAFNVFALAVLAYLALQCRREIEARLYEARFSTRLSNTSQYAVHTAFNIAFFPLLFFFSGLYYTDVASTAAVLVAFLNHLKRIGRDQNSVLSDLVTISLGVFTLFFRQTNVFWVVVFMGGLEAVHAVKTLRPERVDQPVILTLSEQLKHYAWRCSLGDVHDPPLHAMWPDDMIFCVLSLGIAALCNPIRVIRQIWPYITTLLLFGSFVAWNGGVVLGDKSNHVATIHLPQMLYIWPFFAFFSLPLLIPYALPLANALRRLLYMKTSSWSISSSSNKSLSRKSSSKVSNSKGDVAVDAPGSEYPQPSKELQYFEVVFGSKIFLWPLYLLGTIIFSFGIVHYNTIIHPFTLADNRHYMFYVFRYTIRRAAWIRFALVIPYTVARWMTWGTMAGCSQWFMTMHGPACSAYSKGDGKSPFLNHPAFTNRGASPQQTDAAPPAEVKDLDANQQQELSQALKKDPLLASVEPATTSTGLIFLLATTLSLMTAPLVEPRYFIIPWVMWRLLVPAWKFHDHDSEGVAATLERHPKTKPLLLFLQRYDLRLILETFWFIVINAVTGYIFLTKPYVWKAEDGTVLDGGRLQRFMW</sequence>
<keyword id="KW-0256">Endoplasmic reticulum</keyword>
<keyword id="KW-0325">Glycoprotein</keyword>
<keyword id="KW-0328">Glycosyltransferase</keyword>
<keyword id="KW-0472">Membrane</keyword>
<keyword id="KW-1185">Reference proteome</keyword>
<keyword id="KW-0808">Transferase</keyword>
<keyword id="KW-0812">Transmembrane</keyword>
<keyword id="KW-1133">Transmembrane helix</keyword>
<feature type="chain" id="PRO_0000215456" description="Dol-P-Glc:Glc(2)Man(9)GlcNAc(2)-PP-Dol alpha-1,2-glucosyltransferase">
    <location>
        <begin position="1"/>
        <end position="721"/>
    </location>
</feature>
<feature type="transmembrane region" description="Helical" evidence="2">
    <location>
        <begin position="20"/>
        <end position="40"/>
    </location>
</feature>
<feature type="transmembrane region" description="Helical" evidence="2">
    <location>
        <begin position="52"/>
        <end position="72"/>
    </location>
</feature>
<feature type="transmembrane region" description="Helical" evidence="2">
    <location>
        <begin position="132"/>
        <end position="152"/>
    </location>
</feature>
<feature type="transmembrane region" description="Helical" evidence="2">
    <location>
        <begin position="175"/>
        <end position="192"/>
    </location>
</feature>
<feature type="transmembrane region" description="Helical" evidence="2">
    <location>
        <begin position="198"/>
        <end position="214"/>
    </location>
</feature>
<feature type="transmembrane region" description="Helical" evidence="2">
    <location>
        <begin position="233"/>
        <end position="253"/>
    </location>
</feature>
<feature type="transmembrane region" description="Helical" evidence="2">
    <location>
        <begin position="300"/>
        <end position="320"/>
    </location>
</feature>
<feature type="transmembrane region" description="Helical" evidence="2">
    <location>
        <begin position="334"/>
        <end position="353"/>
    </location>
</feature>
<feature type="transmembrane region" description="Helical" evidence="2">
    <location>
        <begin position="367"/>
        <end position="387"/>
    </location>
</feature>
<feature type="transmembrane region" description="Helical" evidence="2">
    <location>
        <begin position="456"/>
        <end position="476"/>
    </location>
</feature>
<feature type="transmembrane region" description="Helical" evidence="2">
    <location>
        <begin position="508"/>
        <end position="528"/>
    </location>
</feature>
<feature type="transmembrane region" description="Helical" evidence="2">
    <location>
        <begin position="678"/>
        <end position="698"/>
    </location>
</feature>
<feature type="region of interest" description="Disordered" evidence="3">
    <location>
        <begin position="406"/>
        <end position="437"/>
    </location>
</feature>
<feature type="glycosylation site" description="N-linked (GlcNAc...) asparagine" evidence="2">
    <location>
        <position position="173"/>
    </location>
</feature>
<feature type="glycosylation site" description="N-linked (GlcNAc...) asparagine" evidence="2">
    <location>
        <position position="411"/>
    </location>
</feature>
<comment type="function">
    <text evidence="1">Dol-P-Glc:Glc(2)Man(9)GlcNAc(2)-PP-Dol alpha-1,2-glucosyltransferase that operates in the biosynthetic pathway of dolichol-linked oligosaccharides, the glycan precursors employed in protein asparagine (N)-glycosylation. The assembly of dolichol-linked oligosaccharides begins on the cytosolic side of the endoplasmic reticulum membrane and finishes in its lumen. The sequential addition of sugars to dolichol pyrophosphate produces dolichol-linked oligosaccharides containing fourteen sugars, including two GlcNAcs, nine mannoses and three glucoses. Once assembled, the oligosaccharide is transferred from the lipid to nascent proteins by oligosaccharyltransferases. In the lumen of the endoplasmic reticulum, adds the third and last glucose residue from dolichyl phosphate glucose (Dol-P-Glc) onto the lipid-linked oligosaccharide intermediate Glc(2)Man(9)GlcNAc(2)-PP-Dol to produce Glc(3)Man(9)GlcNAc(2)-PP-Dol.</text>
</comment>
<comment type="catalytic activity">
    <reaction evidence="1">
        <text>an alpha-D-Glc-(1-&gt;3)-alpha-D-Glc-(1-&gt;3)-alpha-D-Man-(1-&gt;2)-alpha-D-Man-(1-&gt;2)-alpha-D-Man-(1-&gt;3)-[alpha-D-Man-(1-&gt;2)-alpha-D-Man-(1-&gt;3)-[alpha-D-Man-(1-&gt;2)-alpha-D-Man-(1-&gt;6)]-alpha-D-Man-(1-&gt;6)]-beta-D-Man-(1-&gt;4)-beta-D-GlcNAc-(1-&gt;4)-alpha-D-GlcNAc-diphospho-di-trans,poly-cis-dolichol + a di-trans,poly-cis-dolichyl beta-D-glucosyl phosphate = a alpha-D-Glc-(1-&gt;2)-alpha-D-Glc-(1-&gt;3)-alpha-D-Glc-(1-&gt;3)-alpha-D-Man-(1-&gt;2)-alpha-D-Man-(1-&gt;2)-alpha-D-Man-(1-&gt;3)-[alpha-D-Man-(1-&gt;2)-alpha-D-Man-(1-&gt;3)-[alpha-D-Man-(1-&gt;2)-alpha-D-Man-(1-&gt;6)]-alpha-D-Man-(1-&gt;6)]-beta-D-Man-(1-&gt;4)-beta-D-GlcNAc-(1-&gt;4)-alpha-D-GlcNAc-diphospho-di-trans,poly-cis-dolichol + a di-trans,poly-cis-dolichyl phosphate + H(+)</text>
        <dbReference type="Rhea" id="RHEA:29543"/>
        <dbReference type="Rhea" id="RHEA-COMP:19498"/>
        <dbReference type="Rhea" id="RHEA-COMP:19502"/>
        <dbReference type="Rhea" id="RHEA-COMP:19512"/>
        <dbReference type="Rhea" id="RHEA-COMP:19522"/>
        <dbReference type="ChEBI" id="CHEBI:15378"/>
        <dbReference type="ChEBI" id="CHEBI:57525"/>
        <dbReference type="ChEBI" id="CHEBI:57683"/>
        <dbReference type="ChEBI" id="CHEBI:132522"/>
        <dbReference type="ChEBI" id="CHEBI:132523"/>
        <dbReference type="EC" id="2.4.1.256"/>
    </reaction>
    <physiologicalReaction direction="left-to-right" evidence="1">
        <dbReference type="Rhea" id="RHEA:29544"/>
    </physiologicalReaction>
</comment>
<comment type="pathway">
    <text evidence="1">Protein modification; protein glycosylation.</text>
</comment>
<comment type="subcellular location">
    <subcellularLocation>
        <location evidence="1">Endoplasmic reticulum membrane</location>
        <topology evidence="2">Multi-pass membrane protein</topology>
    </subcellularLocation>
</comment>
<comment type="similarity">
    <text evidence="4">Belongs to the ALG10 glucosyltransferase family.</text>
</comment>
<proteinExistence type="inferred from homology"/>
<accession>Q4HZE0</accession>
<accession>A0A0E0S9I4</accession>
<accession>A0A1C3YLT4</accession>
<accession>V6RNY7</accession>
<evidence type="ECO:0000250" key="1">
    <source>
        <dbReference type="UniProtKB" id="P50076"/>
    </source>
</evidence>
<evidence type="ECO:0000255" key="2"/>
<evidence type="ECO:0000256" key="3">
    <source>
        <dbReference type="SAM" id="MobiDB-lite"/>
    </source>
</evidence>
<evidence type="ECO:0000305" key="4"/>
<reference key="1">
    <citation type="journal article" date="2007" name="Science">
        <title>The Fusarium graminearum genome reveals a link between localized polymorphism and pathogen specialization.</title>
        <authorList>
            <person name="Cuomo C.A."/>
            <person name="Gueldener U."/>
            <person name="Xu J.-R."/>
            <person name="Trail F."/>
            <person name="Turgeon B.G."/>
            <person name="Di Pietro A."/>
            <person name="Walton J.D."/>
            <person name="Ma L.-J."/>
            <person name="Baker S.E."/>
            <person name="Rep M."/>
            <person name="Adam G."/>
            <person name="Antoniw J."/>
            <person name="Baldwin T."/>
            <person name="Calvo S.E."/>
            <person name="Chang Y.-L."/>
            <person name="DeCaprio D."/>
            <person name="Gale L.R."/>
            <person name="Gnerre S."/>
            <person name="Goswami R.S."/>
            <person name="Hammond-Kosack K."/>
            <person name="Harris L.J."/>
            <person name="Hilburn K."/>
            <person name="Kennell J.C."/>
            <person name="Kroken S."/>
            <person name="Magnuson J.K."/>
            <person name="Mannhaupt G."/>
            <person name="Mauceli E.W."/>
            <person name="Mewes H.-W."/>
            <person name="Mitterbauer R."/>
            <person name="Muehlbauer G."/>
            <person name="Muensterkoetter M."/>
            <person name="Nelson D."/>
            <person name="O'Donnell K."/>
            <person name="Ouellet T."/>
            <person name="Qi W."/>
            <person name="Quesneville H."/>
            <person name="Roncero M.I.G."/>
            <person name="Seong K.-Y."/>
            <person name="Tetko I.V."/>
            <person name="Urban M."/>
            <person name="Waalwijk C."/>
            <person name="Ward T.J."/>
            <person name="Yao J."/>
            <person name="Birren B.W."/>
            <person name="Kistler H.C."/>
        </authorList>
    </citation>
    <scope>NUCLEOTIDE SEQUENCE [LARGE SCALE GENOMIC DNA]</scope>
    <source>
        <strain>ATCC MYA-4620 / CBS 123657 / FGSC 9075 / NRRL 31084 / PH-1</strain>
    </source>
</reference>
<reference key="2">
    <citation type="journal article" date="2010" name="Nature">
        <title>Comparative genomics reveals mobile pathogenicity chromosomes in Fusarium.</title>
        <authorList>
            <person name="Ma L.-J."/>
            <person name="van der Does H.C."/>
            <person name="Borkovich K.A."/>
            <person name="Coleman J.J."/>
            <person name="Daboussi M.-J."/>
            <person name="Di Pietro A."/>
            <person name="Dufresne M."/>
            <person name="Freitag M."/>
            <person name="Grabherr M."/>
            <person name="Henrissat B."/>
            <person name="Houterman P.M."/>
            <person name="Kang S."/>
            <person name="Shim W.-B."/>
            <person name="Woloshuk C."/>
            <person name="Xie X."/>
            <person name="Xu J.-R."/>
            <person name="Antoniw J."/>
            <person name="Baker S.E."/>
            <person name="Bluhm B.H."/>
            <person name="Breakspear A."/>
            <person name="Brown D.W."/>
            <person name="Butchko R.A.E."/>
            <person name="Chapman S."/>
            <person name="Coulson R."/>
            <person name="Coutinho P.M."/>
            <person name="Danchin E.G.J."/>
            <person name="Diener A."/>
            <person name="Gale L.R."/>
            <person name="Gardiner D.M."/>
            <person name="Goff S."/>
            <person name="Hammond-Kosack K.E."/>
            <person name="Hilburn K."/>
            <person name="Hua-Van A."/>
            <person name="Jonkers W."/>
            <person name="Kazan K."/>
            <person name="Kodira C.D."/>
            <person name="Koehrsen M."/>
            <person name="Kumar L."/>
            <person name="Lee Y.-H."/>
            <person name="Li L."/>
            <person name="Manners J.M."/>
            <person name="Miranda-Saavedra D."/>
            <person name="Mukherjee M."/>
            <person name="Park G."/>
            <person name="Park J."/>
            <person name="Park S.-Y."/>
            <person name="Proctor R.H."/>
            <person name="Regev A."/>
            <person name="Ruiz-Roldan M.C."/>
            <person name="Sain D."/>
            <person name="Sakthikumar S."/>
            <person name="Sykes S."/>
            <person name="Schwartz D.C."/>
            <person name="Turgeon B.G."/>
            <person name="Wapinski I."/>
            <person name="Yoder O."/>
            <person name="Young S."/>
            <person name="Zeng Q."/>
            <person name="Zhou S."/>
            <person name="Galagan J."/>
            <person name="Cuomo C.A."/>
            <person name="Kistler H.C."/>
            <person name="Rep M."/>
        </authorList>
    </citation>
    <scope>GENOME REANNOTATION</scope>
    <source>
        <strain>ATCC MYA-4620 / CBS 123657 / FGSC 9075 / NRRL 31084 / PH-1</strain>
    </source>
</reference>
<reference key="3">
    <citation type="journal article" date="2015" name="BMC Genomics">
        <title>The completed genome sequence of the pathogenic ascomycete fungus Fusarium graminearum.</title>
        <authorList>
            <person name="King R."/>
            <person name="Urban M."/>
            <person name="Hammond-Kosack M.C.U."/>
            <person name="Hassani-Pak K."/>
            <person name="Hammond-Kosack K.E."/>
        </authorList>
    </citation>
    <scope>NUCLEOTIDE SEQUENCE [LARGE SCALE GENOMIC DNA]</scope>
    <source>
        <strain>ATCC MYA-4620 / CBS 123657 / FGSC 9075 / NRRL 31084 / PH-1</strain>
    </source>
</reference>
<organism>
    <name type="scientific">Gibberella zeae (strain ATCC MYA-4620 / CBS 123657 / FGSC 9075 / NRRL 31084 / PH-1)</name>
    <name type="common">Wheat head blight fungus</name>
    <name type="synonym">Fusarium graminearum</name>
    <dbReference type="NCBI Taxonomy" id="229533"/>
    <lineage>
        <taxon>Eukaryota</taxon>
        <taxon>Fungi</taxon>
        <taxon>Dikarya</taxon>
        <taxon>Ascomycota</taxon>
        <taxon>Pezizomycotina</taxon>
        <taxon>Sordariomycetes</taxon>
        <taxon>Hypocreomycetidae</taxon>
        <taxon>Hypocreales</taxon>
        <taxon>Nectriaceae</taxon>
        <taxon>Fusarium</taxon>
    </lineage>
</organism>
<protein>
    <recommendedName>
        <fullName evidence="1">Dol-P-Glc:Glc(2)Man(9)GlcNAc(2)-PP-Dol alpha-1,2-glucosyltransferase</fullName>
        <ecNumber evidence="1">2.4.1.256</ecNumber>
    </recommendedName>
    <alternativeName>
        <fullName>Alpha-1,2-glucosyltransferase ALG10-A</fullName>
    </alternativeName>
    <alternativeName>
        <fullName>Alpha-2-glucosyltransferase ALG10</fullName>
    </alternativeName>
    <alternativeName>
        <fullName>Asparagine-linked glycosylation protein 10</fullName>
    </alternativeName>
    <alternativeName>
        <fullName>Dolichyl-phosphoglucose-dependent glucosyltransferase ALG10</fullName>
    </alternativeName>
</protein>
<name>ALG10_GIBZE</name>